<evidence type="ECO:0000255" key="1">
    <source>
        <dbReference type="HAMAP-Rule" id="MF_00289"/>
    </source>
</evidence>
<reference key="1">
    <citation type="journal article" date="2008" name="J. Bacteriol.">
        <title>Genome sequence of the fish pathogen Renibacterium salmoninarum suggests reductive evolution away from an environmental Arthrobacter ancestor.</title>
        <authorList>
            <person name="Wiens G.D."/>
            <person name="Rockey D.D."/>
            <person name="Wu Z."/>
            <person name="Chang J."/>
            <person name="Levy R."/>
            <person name="Crane S."/>
            <person name="Chen D.S."/>
            <person name="Capri G.R."/>
            <person name="Burnett J.R."/>
            <person name="Sudheesh P.S."/>
            <person name="Schipma M.J."/>
            <person name="Burd H."/>
            <person name="Bhattacharyya A."/>
            <person name="Rhodes L.D."/>
            <person name="Kaul R."/>
            <person name="Strom M.S."/>
        </authorList>
    </citation>
    <scope>NUCLEOTIDE SEQUENCE [LARGE SCALE GENOMIC DNA]</scope>
    <source>
        <strain>ATCC 33209 / DSM 20767 / JCM 11484 / NBRC 15589 / NCIMB 2235</strain>
    </source>
</reference>
<accession>A9WSI0</accession>
<name>PSA_RENSM</name>
<feature type="chain" id="PRO_0000397166" description="Proteasome subunit alpha">
    <location>
        <begin position="1"/>
        <end position="242"/>
    </location>
</feature>
<keyword id="KW-0963">Cytoplasm</keyword>
<keyword id="KW-0647">Proteasome</keyword>
<keyword id="KW-1185">Reference proteome</keyword>
<protein>
    <recommendedName>
        <fullName evidence="1">Proteasome subunit alpha</fullName>
    </recommendedName>
    <alternativeName>
        <fullName evidence="1">20S proteasome alpha subunit</fullName>
    </alternativeName>
    <alternativeName>
        <fullName evidence="1">Proteasome core protein PrcA</fullName>
    </alternativeName>
</protein>
<comment type="function">
    <text evidence="1">Component of the proteasome core, a large protease complex with broad specificity involved in protein degradation.</text>
</comment>
<comment type="activity regulation">
    <text evidence="1">The formation of the proteasomal ATPase ARC-20S proteasome complex, likely via the docking of the C-termini of ARC into the intersubunit pockets in the alpha-rings, may trigger opening of the gate for substrate entry. Interconversion between the open-gate and close-gate conformations leads to a dynamic regulation of the 20S proteasome proteolysis activity.</text>
</comment>
<comment type="pathway">
    <text evidence="1">Protein degradation; proteasomal Pup-dependent pathway.</text>
</comment>
<comment type="subunit">
    <text evidence="1">The 20S proteasome core is composed of 14 alpha and 14 beta subunits that assemble into four stacked heptameric rings, resulting in a barrel-shaped structure. The two inner rings, each composed of seven catalytic beta subunits, are sandwiched by two outer rings, each composed of seven alpha subunits. The catalytic chamber with the active sites is on the inside of the barrel. Has a gated structure, the ends of the cylinder being occluded by the N-termini of the alpha-subunits. Is capped by the proteasome-associated ATPase, ARC.</text>
</comment>
<comment type="subcellular location">
    <subcellularLocation>
        <location evidence="1">Cytoplasm</location>
    </subcellularLocation>
</comment>
<comment type="similarity">
    <text evidence="1">Belongs to the peptidase T1A family.</text>
</comment>
<gene>
    <name evidence="1" type="primary">prcA</name>
    <name type="ordered locus">RSal33209_2035</name>
</gene>
<dbReference type="EMBL" id="CP000910">
    <property type="protein sequence ID" value="ABY23768.1"/>
    <property type="molecule type" value="Genomic_DNA"/>
</dbReference>
<dbReference type="RefSeq" id="WP_012245438.1">
    <property type="nucleotide sequence ID" value="NC_010168.1"/>
</dbReference>
<dbReference type="SMR" id="A9WSI0"/>
<dbReference type="STRING" id="288705.RSal33209_2035"/>
<dbReference type="MEROPS" id="T01.980"/>
<dbReference type="KEGG" id="rsa:RSal33209_2035"/>
<dbReference type="eggNOG" id="COG0638">
    <property type="taxonomic scope" value="Bacteria"/>
</dbReference>
<dbReference type="HOGENOM" id="CLU_071031_0_0_11"/>
<dbReference type="UniPathway" id="UPA00997"/>
<dbReference type="Proteomes" id="UP000002007">
    <property type="component" value="Chromosome"/>
</dbReference>
<dbReference type="GO" id="GO:0005737">
    <property type="term" value="C:cytoplasm"/>
    <property type="evidence" value="ECO:0007669"/>
    <property type="project" value="UniProtKB-SubCell"/>
</dbReference>
<dbReference type="GO" id="GO:0019773">
    <property type="term" value="C:proteasome core complex, alpha-subunit complex"/>
    <property type="evidence" value="ECO:0007669"/>
    <property type="project" value="UniProtKB-UniRule"/>
</dbReference>
<dbReference type="GO" id="GO:0004298">
    <property type="term" value="F:threonine-type endopeptidase activity"/>
    <property type="evidence" value="ECO:0007669"/>
    <property type="project" value="InterPro"/>
</dbReference>
<dbReference type="GO" id="GO:0019941">
    <property type="term" value="P:modification-dependent protein catabolic process"/>
    <property type="evidence" value="ECO:0007669"/>
    <property type="project" value="UniProtKB-UniRule"/>
</dbReference>
<dbReference type="GO" id="GO:0010498">
    <property type="term" value="P:proteasomal protein catabolic process"/>
    <property type="evidence" value="ECO:0007669"/>
    <property type="project" value="UniProtKB-UniRule"/>
</dbReference>
<dbReference type="Gene3D" id="3.60.20.10">
    <property type="entry name" value="Glutamine Phosphoribosylpyrophosphate, subunit 1, domain 1"/>
    <property type="match status" value="1"/>
</dbReference>
<dbReference type="HAMAP" id="MF_00289_B">
    <property type="entry name" value="Proteasome_A_B"/>
    <property type="match status" value="1"/>
</dbReference>
<dbReference type="InterPro" id="IPR029055">
    <property type="entry name" value="Ntn_hydrolases_N"/>
</dbReference>
<dbReference type="InterPro" id="IPR023332">
    <property type="entry name" value="Proteasome_alpha-type"/>
</dbReference>
<dbReference type="InterPro" id="IPR022296">
    <property type="entry name" value="Proteasome_asu_bac"/>
</dbReference>
<dbReference type="InterPro" id="IPR001353">
    <property type="entry name" value="Proteasome_sua/b"/>
</dbReference>
<dbReference type="NCBIfam" id="TIGR03691">
    <property type="entry name" value="20S_bact_alpha"/>
    <property type="match status" value="1"/>
</dbReference>
<dbReference type="Pfam" id="PF00227">
    <property type="entry name" value="Proteasome"/>
    <property type="match status" value="1"/>
</dbReference>
<dbReference type="SUPFAM" id="SSF56235">
    <property type="entry name" value="N-terminal nucleophile aminohydrolases (Ntn hydrolases)"/>
    <property type="match status" value="1"/>
</dbReference>
<dbReference type="PROSITE" id="PS51475">
    <property type="entry name" value="PROTEASOME_ALPHA_2"/>
    <property type="match status" value="1"/>
</dbReference>
<proteinExistence type="inferred from homology"/>
<organism>
    <name type="scientific">Renibacterium salmoninarum (strain ATCC 33209 / DSM 20767 / JCM 11484 / NBRC 15589 / NCIMB 2235)</name>
    <dbReference type="NCBI Taxonomy" id="288705"/>
    <lineage>
        <taxon>Bacteria</taxon>
        <taxon>Bacillati</taxon>
        <taxon>Actinomycetota</taxon>
        <taxon>Actinomycetes</taxon>
        <taxon>Micrococcales</taxon>
        <taxon>Micrococcaceae</taxon>
        <taxon>Renibacterium</taxon>
    </lineage>
</organism>
<sequence length="242" mass="25828">MTQQFYVSPEQVMKDRADFARKGIARGRSVVVVSSLEGIALVAENPSPSLHKIGEIYDKIAFAAVGKYNEFESLRQAGVRYADVRGYSYDRDDVTARGLASVYAQSLGAVFTAEQKPFEVELAVAEVGENQDQDHLYRLTFDGSIADETGFIAMGGQVDSVHQVVAAGWASGSSLADVVGLAVGALGAGREPVVELDAANLEIAVLDRDSETSRGVARAFRRLNANEVNDLLSPRGSGSPAE</sequence>